<protein>
    <recommendedName>
        <fullName evidence="1">CTP synthase</fullName>
        <ecNumber evidence="1">6.3.4.2</ecNumber>
    </recommendedName>
    <alternativeName>
        <fullName evidence="1">Cytidine 5'-triphosphate synthase</fullName>
    </alternativeName>
    <alternativeName>
        <fullName evidence="1">Cytidine triphosphate synthetase</fullName>
        <shortName evidence="1">CTP synthetase</shortName>
        <shortName evidence="1">CTPS</shortName>
    </alternativeName>
    <alternativeName>
        <fullName evidence="1">UTP--ammonia ligase</fullName>
    </alternativeName>
</protein>
<organism>
    <name type="scientific">Methanosarcina mazei (strain ATCC BAA-159 / DSM 3647 / Goe1 / Go1 / JCM 11833 / OCM 88)</name>
    <name type="common">Methanosarcina frisia</name>
    <dbReference type="NCBI Taxonomy" id="192952"/>
    <lineage>
        <taxon>Archaea</taxon>
        <taxon>Methanobacteriati</taxon>
        <taxon>Methanobacteriota</taxon>
        <taxon>Stenosarchaea group</taxon>
        <taxon>Methanomicrobia</taxon>
        <taxon>Methanosarcinales</taxon>
        <taxon>Methanosarcinaceae</taxon>
        <taxon>Methanosarcina</taxon>
    </lineage>
</organism>
<proteinExistence type="inferred from homology"/>
<keyword id="KW-0067">ATP-binding</keyword>
<keyword id="KW-0315">Glutamine amidotransferase</keyword>
<keyword id="KW-0436">Ligase</keyword>
<keyword id="KW-0460">Magnesium</keyword>
<keyword id="KW-0479">Metal-binding</keyword>
<keyword id="KW-0547">Nucleotide-binding</keyword>
<keyword id="KW-0665">Pyrimidine biosynthesis</keyword>
<reference key="1">
    <citation type="journal article" date="2002" name="J. Mol. Microbiol. Biotechnol.">
        <title>The genome of Methanosarcina mazei: evidence for lateral gene transfer between Bacteria and Archaea.</title>
        <authorList>
            <person name="Deppenmeier U."/>
            <person name="Johann A."/>
            <person name="Hartsch T."/>
            <person name="Merkl R."/>
            <person name="Schmitz R.A."/>
            <person name="Martinez-Arias R."/>
            <person name="Henne A."/>
            <person name="Wiezer A."/>
            <person name="Baeumer S."/>
            <person name="Jacobi C."/>
            <person name="Brueggemann H."/>
            <person name="Lienard T."/>
            <person name="Christmann A."/>
            <person name="Boemecke M."/>
            <person name="Steckel S."/>
            <person name="Bhattacharyya A."/>
            <person name="Lykidis A."/>
            <person name="Overbeek R."/>
            <person name="Klenk H.-P."/>
            <person name="Gunsalus R.P."/>
            <person name="Fritz H.-J."/>
            <person name="Gottschalk G."/>
        </authorList>
    </citation>
    <scope>NUCLEOTIDE SEQUENCE [LARGE SCALE GENOMIC DNA]</scope>
    <source>
        <strain>ATCC BAA-159 / DSM 3647 / Goe1 / Go1 / JCM 11833 / OCM 88</strain>
    </source>
</reference>
<sequence length="534" mass="59718">MKYIVVTGGVMSGLGKGITIASIGRNLKNKGYKVTAIKIDPYINIDAGTMSPYQHGEVFVLRDGGEVDLDLGNYERFLDTELTRDHNITTGKVYQEVIAKERRGDYLGKTVQIIPHITNEIKNKIRKVAARSGADVCLIEIGGTVGDIESMPFLEAVRQMHREEPSENIVFIHVTLVMEDLQGEQKTKPTQHSVKELRALGLSPEVIVTRSKTPLQESAKEKIALFCDVPQELVISAHDAGDIYEVPLEIEEQGLTTQLMKHLRLESGVDDGGWREMVARMKSTTDEVKLAIVGKYTNLEDSYLSILEAVKHGGIDNACRVEVNMVEAETLEEDLVEVEKLKQYDGILIPGGFGGRGTEGKMLAIKFARENDIPFLGICLGMQLAVIEFARNVANLENANSTEFDEDTPYPVIDILPEQTGVADMGGTMRLGDYDAILKEGSFATKLYGTNYIVERHRHRYEVNPEFVDRLESFGIVFSGKNKNRMEIAEIPGKRFFFASQFHPEFKSRPGRPSPPFKGLVRAMCKYRKEREVQ</sequence>
<evidence type="ECO:0000255" key="1">
    <source>
        <dbReference type="HAMAP-Rule" id="MF_01227"/>
    </source>
</evidence>
<name>PYRG_METMA</name>
<gene>
    <name evidence="1" type="primary">pyrG</name>
    <name type="ordered locus">MM_0118</name>
</gene>
<comment type="function">
    <text evidence="1">Catalyzes the ATP-dependent amination of UTP to CTP with either L-glutamine or ammonia as the source of nitrogen. Regulates intracellular CTP levels through interactions with the four ribonucleotide triphosphates.</text>
</comment>
<comment type="catalytic activity">
    <reaction evidence="1">
        <text>UTP + L-glutamine + ATP + H2O = CTP + L-glutamate + ADP + phosphate + 2 H(+)</text>
        <dbReference type="Rhea" id="RHEA:26426"/>
        <dbReference type="ChEBI" id="CHEBI:15377"/>
        <dbReference type="ChEBI" id="CHEBI:15378"/>
        <dbReference type="ChEBI" id="CHEBI:29985"/>
        <dbReference type="ChEBI" id="CHEBI:30616"/>
        <dbReference type="ChEBI" id="CHEBI:37563"/>
        <dbReference type="ChEBI" id="CHEBI:43474"/>
        <dbReference type="ChEBI" id="CHEBI:46398"/>
        <dbReference type="ChEBI" id="CHEBI:58359"/>
        <dbReference type="ChEBI" id="CHEBI:456216"/>
        <dbReference type="EC" id="6.3.4.2"/>
    </reaction>
</comment>
<comment type="catalytic activity">
    <reaction evidence="1">
        <text>L-glutamine + H2O = L-glutamate + NH4(+)</text>
        <dbReference type="Rhea" id="RHEA:15889"/>
        <dbReference type="ChEBI" id="CHEBI:15377"/>
        <dbReference type="ChEBI" id="CHEBI:28938"/>
        <dbReference type="ChEBI" id="CHEBI:29985"/>
        <dbReference type="ChEBI" id="CHEBI:58359"/>
    </reaction>
</comment>
<comment type="catalytic activity">
    <reaction evidence="1">
        <text>UTP + NH4(+) + ATP = CTP + ADP + phosphate + 2 H(+)</text>
        <dbReference type="Rhea" id="RHEA:16597"/>
        <dbReference type="ChEBI" id="CHEBI:15378"/>
        <dbReference type="ChEBI" id="CHEBI:28938"/>
        <dbReference type="ChEBI" id="CHEBI:30616"/>
        <dbReference type="ChEBI" id="CHEBI:37563"/>
        <dbReference type="ChEBI" id="CHEBI:43474"/>
        <dbReference type="ChEBI" id="CHEBI:46398"/>
        <dbReference type="ChEBI" id="CHEBI:456216"/>
    </reaction>
</comment>
<comment type="activity regulation">
    <text evidence="1">Allosterically activated by GTP, when glutamine is the substrate; GTP has no effect on the reaction when ammonia is the substrate. The allosteric effector GTP functions by stabilizing the protein conformation that binds the tetrahedral intermediate(s) formed during glutamine hydrolysis. Inhibited by the product CTP, via allosteric rather than competitive inhibition.</text>
</comment>
<comment type="pathway">
    <text evidence="1">Pyrimidine metabolism; CTP biosynthesis via de novo pathway; CTP from UDP: step 2/2.</text>
</comment>
<comment type="subunit">
    <text evidence="1">Homotetramer.</text>
</comment>
<comment type="miscellaneous">
    <text evidence="1">CTPSs have evolved a hybrid strategy for distinguishing between UTP and CTP. The overlapping regions of the product feedback inhibitory and substrate sites recognize a common feature in both compounds, the triphosphate moiety. To differentiate isosteric substrate and product pyrimidine rings, an additional pocket far from the expected kinase/ligase catalytic site, specifically recognizes the cytosine and ribose portions of the product inhibitor.</text>
</comment>
<comment type="similarity">
    <text evidence="1">Belongs to the CTP synthase family.</text>
</comment>
<dbReference type="EC" id="6.3.4.2" evidence="1"/>
<dbReference type="EMBL" id="AE008384">
    <property type="protein sequence ID" value="AAM29814.1"/>
    <property type="molecule type" value="Genomic_DNA"/>
</dbReference>
<dbReference type="RefSeq" id="WP_011032072.1">
    <property type="nucleotide sequence ID" value="NC_003901.1"/>
</dbReference>
<dbReference type="SMR" id="Q8Q0L8"/>
<dbReference type="GeneID" id="82159086"/>
<dbReference type="KEGG" id="mma:MM_0118"/>
<dbReference type="PATRIC" id="fig|192952.21.peg.135"/>
<dbReference type="eggNOG" id="arCOG00063">
    <property type="taxonomic scope" value="Archaea"/>
</dbReference>
<dbReference type="HOGENOM" id="CLU_011675_5_0_2"/>
<dbReference type="UniPathway" id="UPA00159">
    <property type="reaction ID" value="UER00277"/>
</dbReference>
<dbReference type="Proteomes" id="UP000000595">
    <property type="component" value="Chromosome"/>
</dbReference>
<dbReference type="GO" id="GO:0005524">
    <property type="term" value="F:ATP binding"/>
    <property type="evidence" value="ECO:0007669"/>
    <property type="project" value="UniProtKB-KW"/>
</dbReference>
<dbReference type="GO" id="GO:0003883">
    <property type="term" value="F:CTP synthase activity"/>
    <property type="evidence" value="ECO:0007669"/>
    <property type="project" value="UniProtKB-UniRule"/>
</dbReference>
<dbReference type="GO" id="GO:0004359">
    <property type="term" value="F:glutaminase activity"/>
    <property type="evidence" value="ECO:0007669"/>
    <property type="project" value="RHEA"/>
</dbReference>
<dbReference type="GO" id="GO:0042802">
    <property type="term" value="F:identical protein binding"/>
    <property type="evidence" value="ECO:0007669"/>
    <property type="project" value="TreeGrafter"/>
</dbReference>
<dbReference type="GO" id="GO:0046872">
    <property type="term" value="F:metal ion binding"/>
    <property type="evidence" value="ECO:0007669"/>
    <property type="project" value="UniProtKB-KW"/>
</dbReference>
<dbReference type="GO" id="GO:0044210">
    <property type="term" value="P:'de novo' CTP biosynthetic process"/>
    <property type="evidence" value="ECO:0007669"/>
    <property type="project" value="UniProtKB-UniRule"/>
</dbReference>
<dbReference type="GO" id="GO:0019856">
    <property type="term" value="P:pyrimidine nucleobase biosynthetic process"/>
    <property type="evidence" value="ECO:0007669"/>
    <property type="project" value="TreeGrafter"/>
</dbReference>
<dbReference type="CDD" id="cd03113">
    <property type="entry name" value="CTPS_N"/>
    <property type="match status" value="1"/>
</dbReference>
<dbReference type="CDD" id="cd01746">
    <property type="entry name" value="GATase1_CTP_Synthase"/>
    <property type="match status" value="1"/>
</dbReference>
<dbReference type="FunFam" id="3.40.50.300:FF:000009">
    <property type="entry name" value="CTP synthase"/>
    <property type="match status" value="1"/>
</dbReference>
<dbReference type="FunFam" id="3.40.50.880:FF:000002">
    <property type="entry name" value="CTP synthase"/>
    <property type="match status" value="1"/>
</dbReference>
<dbReference type="Gene3D" id="3.40.50.880">
    <property type="match status" value="1"/>
</dbReference>
<dbReference type="Gene3D" id="3.40.50.300">
    <property type="entry name" value="P-loop containing nucleotide triphosphate hydrolases"/>
    <property type="match status" value="1"/>
</dbReference>
<dbReference type="HAMAP" id="MF_01227">
    <property type="entry name" value="PyrG"/>
    <property type="match status" value="1"/>
</dbReference>
<dbReference type="InterPro" id="IPR029062">
    <property type="entry name" value="Class_I_gatase-like"/>
</dbReference>
<dbReference type="InterPro" id="IPR004468">
    <property type="entry name" value="CTP_synthase"/>
</dbReference>
<dbReference type="InterPro" id="IPR017456">
    <property type="entry name" value="CTP_synthase_N"/>
</dbReference>
<dbReference type="InterPro" id="IPR017926">
    <property type="entry name" value="GATASE"/>
</dbReference>
<dbReference type="InterPro" id="IPR033828">
    <property type="entry name" value="GATase1_CTP_Synthase"/>
</dbReference>
<dbReference type="InterPro" id="IPR027417">
    <property type="entry name" value="P-loop_NTPase"/>
</dbReference>
<dbReference type="NCBIfam" id="NF003792">
    <property type="entry name" value="PRK05380.1"/>
    <property type="match status" value="1"/>
</dbReference>
<dbReference type="NCBIfam" id="TIGR00337">
    <property type="entry name" value="PyrG"/>
    <property type="match status" value="1"/>
</dbReference>
<dbReference type="PANTHER" id="PTHR11550">
    <property type="entry name" value="CTP SYNTHASE"/>
    <property type="match status" value="1"/>
</dbReference>
<dbReference type="PANTHER" id="PTHR11550:SF0">
    <property type="entry name" value="CTP SYNTHASE-RELATED"/>
    <property type="match status" value="1"/>
</dbReference>
<dbReference type="Pfam" id="PF06418">
    <property type="entry name" value="CTP_synth_N"/>
    <property type="match status" value="1"/>
</dbReference>
<dbReference type="Pfam" id="PF00117">
    <property type="entry name" value="GATase"/>
    <property type="match status" value="1"/>
</dbReference>
<dbReference type="SUPFAM" id="SSF52317">
    <property type="entry name" value="Class I glutamine amidotransferase-like"/>
    <property type="match status" value="1"/>
</dbReference>
<dbReference type="SUPFAM" id="SSF52540">
    <property type="entry name" value="P-loop containing nucleoside triphosphate hydrolases"/>
    <property type="match status" value="1"/>
</dbReference>
<dbReference type="PROSITE" id="PS51273">
    <property type="entry name" value="GATASE_TYPE_1"/>
    <property type="match status" value="1"/>
</dbReference>
<feature type="chain" id="PRO_0000138262" description="CTP synthase">
    <location>
        <begin position="1"/>
        <end position="534"/>
    </location>
</feature>
<feature type="domain" description="Glutamine amidotransferase type-1" evidence="1">
    <location>
        <begin position="289"/>
        <end position="530"/>
    </location>
</feature>
<feature type="region of interest" description="Amidoligase domain" evidence="1">
    <location>
        <begin position="1"/>
        <end position="265"/>
    </location>
</feature>
<feature type="active site" description="Nucleophile; for glutamine hydrolysis" evidence="1">
    <location>
        <position position="379"/>
    </location>
</feature>
<feature type="active site" evidence="1">
    <location>
        <position position="503"/>
    </location>
</feature>
<feature type="active site" evidence="1">
    <location>
        <position position="505"/>
    </location>
</feature>
<feature type="binding site" evidence="1">
    <location>
        <position position="12"/>
    </location>
    <ligand>
        <name>CTP</name>
        <dbReference type="ChEBI" id="CHEBI:37563"/>
        <note>allosteric inhibitor</note>
    </ligand>
</feature>
<feature type="binding site" evidence="1">
    <location>
        <position position="12"/>
    </location>
    <ligand>
        <name>UTP</name>
        <dbReference type="ChEBI" id="CHEBI:46398"/>
    </ligand>
</feature>
<feature type="binding site" evidence="1">
    <location>
        <begin position="13"/>
        <end position="18"/>
    </location>
    <ligand>
        <name>ATP</name>
        <dbReference type="ChEBI" id="CHEBI:30616"/>
    </ligand>
</feature>
<feature type="binding site" evidence="1">
    <location>
        <position position="53"/>
    </location>
    <ligand>
        <name>L-glutamine</name>
        <dbReference type="ChEBI" id="CHEBI:58359"/>
    </ligand>
</feature>
<feature type="binding site" evidence="1">
    <location>
        <position position="70"/>
    </location>
    <ligand>
        <name>ATP</name>
        <dbReference type="ChEBI" id="CHEBI:30616"/>
    </ligand>
</feature>
<feature type="binding site" evidence="1">
    <location>
        <position position="70"/>
    </location>
    <ligand>
        <name>Mg(2+)</name>
        <dbReference type="ChEBI" id="CHEBI:18420"/>
    </ligand>
</feature>
<feature type="binding site" evidence="1">
    <location>
        <position position="140"/>
    </location>
    <ligand>
        <name>Mg(2+)</name>
        <dbReference type="ChEBI" id="CHEBI:18420"/>
    </ligand>
</feature>
<feature type="binding site" evidence="1">
    <location>
        <begin position="147"/>
        <end position="149"/>
    </location>
    <ligand>
        <name>CTP</name>
        <dbReference type="ChEBI" id="CHEBI:37563"/>
        <note>allosteric inhibitor</note>
    </ligand>
</feature>
<feature type="binding site" evidence="1">
    <location>
        <begin position="186"/>
        <end position="191"/>
    </location>
    <ligand>
        <name>CTP</name>
        <dbReference type="ChEBI" id="CHEBI:37563"/>
        <note>allosteric inhibitor</note>
    </ligand>
</feature>
<feature type="binding site" evidence="1">
    <location>
        <begin position="186"/>
        <end position="191"/>
    </location>
    <ligand>
        <name>UTP</name>
        <dbReference type="ChEBI" id="CHEBI:46398"/>
    </ligand>
</feature>
<feature type="binding site" evidence="1">
    <location>
        <position position="222"/>
    </location>
    <ligand>
        <name>CTP</name>
        <dbReference type="ChEBI" id="CHEBI:37563"/>
        <note>allosteric inhibitor</note>
    </ligand>
</feature>
<feature type="binding site" evidence="1">
    <location>
        <position position="222"/>
    </location>
    <ligand>
        <name>UTP</name>
        <dbReference type="ChEBI" id="CHEBI:46398"/>
    </ligand>
</feature>
<feature type="binding site" evidence="1">
    <location>
        <position position="352"/>
    </location>
    <ligand>
        <name>L-glutamine</name>
        <dbReference type="ChEBI" id="CHEBI:58359"/>
    </ligand>
</feature>
<feature type="binding site" evidence="1">
    <location>
        <begin position="380"/>
        <end position="383"/>
    </location>
    <ligand>
        <name>L-glutamine</name>
        <dbReference type="ChEBI" id="CHEBI:58359"/>
    </ligand>
</feature>
<feature type="binding site" evidence="1">
    <location>
        <position position="403"/>
    </location>
    <ligand>
        <name>L-glutamine</name>
        <dbReference type="ChEBI" id="CHEBI:58359"/>
    </ligand>
</feature>
<feature type="binding site" evidence="1">
    <location>
        <position position="460"/>
    </location>
    <ligand>
        <name>L-glutamine</name>
        <dbReference type="ChEBI" id="CHEBI:58359"/>
    </ligand>
</feature>
<accession>Q8Q0L8</accession>